<accession>Q01118</accession>
<sequence>MLASPEPKGLVPFTKESFELIKQHIAKTHNEDHEEEDLKPTPDLEVGKKLPFIYGNLSQGMVSEPLEDVDPYYYKKKNTFIVLNKNRTIFRFNAASILCTLSPFNCIRRTTIKVLVHPFFQLFILISVLIDCVFMSLTNLPKWRPVLENTLLGIYTFEILVKLFARGVWAGSFSFLGDPWNWLDFSVTVFEVIIRYSPLDFIPTLQTARTLRILKIIPLNQGLKSLVGVLIHCLKQLIGVIILTLFFLSIFSLIGMGLFMGNLKHKCFRWPQENENETLHNRTGNPYYIRETENFYYLEGERYALLCGNRTDAGQCPEGYVCVKAGINPDQGFTNFDSFGWALFALFRLMAQDYPEVLYHQILYASGKVYMIFFVVVSFLFSFYMASLFLGILAMAYEEEKQRVGEISKKIEPKFQQTGKELQEGNETDEAKTIQIEMKKRSPISTDTSLDVLEDATLRHKEELEKSKKICPLYWYKFAKTFLIWNCSPCWLKLKEFVHRIIMAPFTDLFLIICIILNVCFLTLEHYPMSKQTNTLLNIGNLVFIGIFTAEMIFKIIAMHPYGYFQVGWNIFDSMIVFHGLIELCLANVAGMALLRLFRMLRIFKLGKYWPTFQILMWSLSNSWVALKDLVLLLFTFIFFSAAFGMKLFGKNYEEFVCHIDKDCQLPRWHMHDFFHSFLNVFRILCGEWVETLWDCMEVAGQSWCIPFYLMVILIGNLLVLYLFLALVSSFSSCKDVTAEENNEAKNLQLAVARIKKGINYVLLKILCKTQNVPKDTMDHVNEVYVKEDISDHTLSELSNTQDFLKDKEKSSGTEKNATENESQSLIPSPSVSETVPIASGESDIENLDNKEIQSKSGDGGSKEKIKQSSSSECSTVDIAISEEEEMFYGGERSKHLKNGCRRGSSLGQISGASKKGKIWQNIRKTCCKIVENNWFKCFIGLVTLLSTGTLAFEDIYMDQRKTIKILLEYADMIFTYIFILEMLLKWMAYGFKAYFSNGWYRLDFVVVIVFCLSLIGKTREELKPLISMKFLRPLRVLSQFERMKVVVRALIKTTLPTLNVFLVCLMIWLIFSIMGVDLFAGRFYECIDPTSGERFPSSEVMNKSRCESLLFNESMLWENAKMNFDNVGNGFLSLLQVATFNGWITIMNSAIDSVAVNIQPHFEVNIYMYCYFINFIIFGVFLPLSMLITVIIDNFNKHKIKLGGSNIFITVKQRKQYRRLKKLMYEDSQRPVPRPLNKLQGFIFDVVTSQAFNVIVMVLICFQAIAMMIDTDVQSLQMSIALYWINSIFVMLYTMECILKLIAFRCFYFTIAWNIFDFMVVIFSITGLCLPMTVGSYLVPPSLVQLILLSRIIHMLRLGKGPKVFHNLMLPLMLSLPALLNIILLIFLVMFIYAVFGMYNFAYVKKEAGINDVSNFETFGNSMLCLFQVAIFAGWDGMLDAIFNSKWSDCDPDKINPGTQVRGDCGNPSVGIFYFVSYILISWLIIVNMYIVVVMEFLNIASKKKNKTLSEDDFRKFFQVWKRFDPDRTQYIDSSKLSDFAAALDPPLFMAKPNKGQLIALDLPMAVGDRIHCLDILLAFTKRVMGQDVRMEKVVSEIESGFLLANPFKITCEPITTTLKRKQEAVSATIIQRAYKNYRLRRNDKNTSDIHMIDGDRDVHATKEGAYFDKAKEKSPIQSQI</sequence>
<dbReference type="EMBL" id="M91556">
    <property type="protein sequence ID" value="AAA59899.1"/>
    <property type="molecule type" value="mRNA"/>
</dbReference>
<dbReference type="EMBL" id="AC074101">
    <property type="status" value="NOT_ANNOTATED_CDS"/>
    <property type="molecule type" value="Genomic_DNA"/>
</dbReference>
<dbReference type="EMBL" id="AC092583">
    <property type="status" value="NOT_ANNOTATED_CDS"/>
    <property type="molecule type" value="Genomic_DNA"/>
</dbReference>
<dbReference type="CCDS" id="CCDS46442.1"/>
<dbReference type="PIR" id="A45380">
    <property type="entry name" value="A45380"/>
</dbReference>
<dbReference type="RefSeq" id="NP_002967.2">
    <property type="nucleotide sequence ID" value="NM_002976.4"/>
</dbReference>
<dbReference type="RefSeq" id="XP_006712743.1">
    <property type="nucleotide sequence ID" value="XM_006712680.3"/>
</dbReference>
<dbReference type="RefSeq" id="XP_006712744.1">
    <property type="nucleotide sequence ID" value="XM_006712681.3"/>
</dbReference>
<dbReference type="RefSeq" id="XP_006712745.1">
    <property type="nucleotide sequence ID" value="XM_006712682.4"/>
</dbReference>
<dbReference type="RefSeq" id="XP_011509917.1">
    <property type="nucleotide sequence ID" value="XM_011511615.3"/>
</dbReference>
<dbReference type="RefSeq" id="XP_016860156.1">
    <property type="nucleotide sequence ID" value="XM_017004667.2"/>
</dbReference>
<dbReference type="RefSeq" id="XP_047301352.1">
    <property type="nucleotide sequence ID" value="XM_047445396.1"/>
</dbReference>
<dbReference type="RefSeq" id="XP_047301353.1">
    <property type="nucleotide sequence ID" value="XM_047445397.1"/>
</dbReference>
<dbReference type="RefSeq" id="XP_047301354.1">
    <property type="nucleotide sequence ID" value="XM_047445398.1"/>
</dbReference>
<dbReference type="RefSeq" id="XP_054199288.1">
    <property type="nucleotide sequence ID" value="XM_054343313.1"/>
</dbReference>
<dbReference type="RefSeq" id="XP_054199289.1">
    <property type="nucleotide sequence ID" value="XM_054343314.1"/>
</dbReference>
<dbReference type="RefSeq" id="XP_054199290.1">
    <property type="nucleotide sequence ID" value="XM_054343315.1"/>
</dbReference>
<dbReference type="RefSeq" id="XP_054199291.1">
    <property type="nucleotide sequence ID" value="XM_054343316.1"/>
</dbReference>
<dbReference type="RefSeq" id="XP_054199292.1">
    <property type="nucleotide sequence ID" value="XM_054343317.1"/>
</dbReference>
<dbReference type="RefSeq" id="XP_054199293.1">
    <property type="nucleotide sequence ID" value="XM_054343318.1"/>
</dbReference>
<dbReference type="RefSeq" id="XP_054199294.1">
    <property type="nucleotide sequence ID" value="XM_054343319.1"/>
</dbReference>
<dbReference type="PDB" id="7TJ8">
    <property type="method" value="EM"/>
    <property type="resolution" value="3.20 A"/>
    <property type="chains" value="A=1-1682"/>
</dbReference>
<dbReference type="PDB" id="7TJ9">
    <property type="method" value="EM"/>
    <property type="resolution" value="2.90 A"/>
    <property type="chains" value="A=1-1682"/>
</dbReference>
<dbReference type="PDBsum" id="7TJ8"/>
<dbReference type="PDBsum" id="7TJ9"/>
<dbReference type="EMDB" id="EMD-25919"/>
<dbReference type="EMDB" id="EMD-25920"/>
<dbReference type="SMR" id="Q01118"/>
<dbReference type="BioGRID" id="112237">
    <property type="interactions" value="4"/>
</dbReference>
<dbReference type="ComplexPortal" id="CPX-8691">
    <property type="entry name" value="Nax cation channel complex, SCN2B-SCN3B variant"/>
</dbReference>
<dbReference type="ComplexPortal" id="CPX-8692">
    <property type="entry name" value="Nax cation channel complex, SCN3B-SCN4B variant"/>
</dbReference>
<dbReference type="ComplexPortal" id="CPX-8693">
    <property type="entry name" value="Nax cation channel complex, SCN1B-SCN4B variant"/>
</dbReference>
<dbReference type="ComplexPortal" id="CPX-8694">
    <property type="entry name" value="Nax cation channel complex, SCN1B-SCN2B variant"/>
</dbReference>
<dbReference type="CORUM" id="Q01118"/>
<dbReference type="FunCoup" id="Q01118">
    <property type="interactions" value="160"/>
</dbReference>
<dbReference type="IntAct" id="Q01118">
    <property type="interactions" value="3"/>
</dbReference>
<dbReference type="STRING" id="9606.ENSP00000496114"/>
<dbReference type="BindingDB" id="Q01118"/>
<dbReference type="ChEMBL" id="CHEMBL3585"/>
<dbReference type="DrugBank" id="DB09088">
    <property type="generic name" value="Amylocaine"/>
</dbReference>
<dbReference type="DrugBank" id="DB09009">
    <property type="generic name" value="Articaine"/>
</dbReference>
<dbReference type="DrugBank" id="DB13746">
    <property type="generic name" value="Bioallethrin"/>
</dbReference>
<dbReference type="DrugBank" id="DB05541">
    <property type="generic name" value="Brivaracetam"/>
</dbReference>
<dbReference type="DrugBank" id="DB00564">
    <property type="generic name" value="Carbamazepine"/>
</dbReference>
<dbReference type="DrugBank" id="DB06119">
    <property type="generic name" value="Cenobamate"/>
</dbReference>
<dbReference type="DrugBank" id="DB01161">
    <property type="generic name" value="Chloroprocaine"/>
</dbReference>
<dbReference type="DrugBank" id="DB00907">
    <property type="generic name" value="Cocaine"/>
</dbReference>
<dbReference type="DrugBank" id="DB13269">
    <property type="generic name" value="Dichlorobenzyl alcohol"/>
</dbReference>
<dbReference type="DrugBank" id="DB13961">
    <property type="generic name" value="Fish oil"/>
</dbReference>
<dbReference type="DrugBank" id="DB00555">
    <property type="generic name" value="Lamotrigine"/>
</dbReference>
<dbReference type="DrugBank" id="DB00776">
    <property type="generic name" value="Oxcarbazepine"/>
</dbReference>
<dbReference type="DrugBank" id="DB11186">
    <property type="generic name" value="Pentoxyverine"/>
</dbReference>
<dbReference type="DrugBank" id="DB09345">
    <property type="generic name" value="Pramocaine"/>
</dbReference>
<dbReference type="DrugBank" id="DB01069">
    <property type="generic name" value="Promethazine"/>
</dbReference>
<dbReference type="DrugBank" id="DB09342">
    <property type="generic name" value="Propoxycaine"/>
</dbReference>
<dbReference type="DrugBank" id="DB00243">
    <property type="generic name" value="Ranolazine"/>
</dbReference>
<dbReference type="DrugBank" id="DB09085">
    <property type="generic name" value="Tetracaine"/>
</dbReference>
<dbReference type="DrugBank" id="DB00273">
    <property type="generic name" value="Topiramate"/>
</dbReference>
<dbReference type="DrugBank" id="DB00313">
    <property type="generic name" value="Valproic acid"/>
</dbReference>
<dbReference type="DrugCentral" id="Q01118"/>
<dbReference type="GlyConnect" id="1753">
    <property type="glycosylation" value="1 N-Linked glycan (1 site)"/>
</dbReference>
<dbReference type="GlyCosmos" id="Q01118">
    <property type="glycosylation" value="5 sites, 1 glycan"/>
</dbReference>
<dbReference type="GlyGen" id="Q01118">
    <property type="glycosylation" value="7 sites, 1 N-linked glycan (1 site), 1 O-linked glycan (1 site)"/>
</dbReference>
<dbReference type="iPTMnet" id="Q01118"/>
<dbReference type="PhosphoSitePlus" id="Q01118"/>
<dbReference type="SwissPalm" id="Q01118"/>
<dbReference type="BioMuta" id="SCN7A"/>
<dbReference type="DMDM" id="296452902"/>
<dbReference type="MassIVE" id="Q01118"/>
<dbReference type="PaxDb" id="9606-ENSP00000386796"/>
<dbReference type="PeptideAtlas" id="Q01118"/>
<dbReference type="ProteomicsDB" id="57921"/>
<dbReference type="Antibodypedia" id="1383">
    <property type="antibodies" value="131 antibodies from 24 providers"/>
</dbReference>
<dbReference type="DNASU" id="6332"/>
<dbReference type="Ensembl" id="ENST00000441411.2">
    <property type="protein sequence ID" value="ENSP00000403846.2"/>
    <property type="gene ID" value="ENSG00000136546.17"/>
</dbReference>
<dbReference type="Ensembl" id="ENST00000643258.1">
    <property type="protein sequence ID" value="ENSP00000496114.1"/>
    <property type="gene ID" value="ENSG00000136546.17"/>
</dbReference>
<dbReference type="GeneID" id="6332"/>
<dbReference type="KEGG" id="hsa:6332"/>
<dbReference type="MANE-Select" id="ENST00000643258.1">
    <property type="protein sequence ID" value="ENSP00000496114.1"/>
    <property type="RefSeq nucleotide sequence ID" value="NM_002976.4"/>
    <property type="RefSeq protein sequence ID" value="NP_002967.2"/>
</dbReference>
<dbReference type="UCSC" id="uc002udu.3">
    <property type="organism name" value="human"/>
</dbReference>
<dbReference type="AGR" id="HGNC:10594"/>
<dbReference type="CTD" id="6332"/>
<dbReference type="DisGeNET" id="6332"/>
<dbReference type="GeneCards" id="SCN7A"/>
<dbReference type="HGNC" id="HGNC:10594">
    <property type="gene designation" value="SCN7A"/>
</dbReference>
<dbReference type="HPA" id="ENSG00000136546">
    <property type="expression patterns" value="Tissue enhanced (intestine, ovary)"/>
</dbReference>
<dbReference type="MalaCards" id="SCN7A"/>
<dbReference type="MIM" id="182392">
    <property type="type" value="gene"/>
</dbReference>
<dbReference type="neXtProt" id="NX_Q01118"/>
<dbReference type="OpenTargets" id="ENSG00000136546"/>
<dbReference type="PharmGKB" id="PA35008"/>
<dbReference type="VEuPathDB" id="HostDB:ENSG00000136546"/>
<dbReference type="eggNOG" id="KOG2301">
    <property type="taxonomic scope" value="Eukaryota"/>
</dbReference>
<dbReference type="GeneTree" id="ENSGT00940000162042"/>
<dbReference type="HOGENOM" id="CLU_000540_5_0_1"/>
<dbReference type="InParanoid" id="Q01118"/>
<dbReference type="OMA" id="ENSWFKC"/>
<dbReference type="OrthoDB" id="416585at2759"/>
<dbReference type="PAN-GO" id="Q01118">
    <property type="GO annotations" value="6 GO annotations based on evolutionary models"/>
</dbReference>
<dbReference type="PhylomeDB" id="Q01118"/>
<dbReference type="TreeFam" id="TF323985"/>
<dbReference type="PathwayCommons" id="Q01118"/>
<dbReference type="Reactome" id="R-HSA-445095">
    <property type="pathway name" value="Interaction between L1 and Ankyrins"/>
</dbReference>
<dbReference type="Reactome" id="R-HSA-5576892">
    <property type="pathway name" value="Phase 0 - rapid depolarisation"/>
</dbReference>
<dbReference type="SignaLink" id="Q01118"/>
<dbReference type="BioGRID-ORCS" id="6332">
    <property type="hits" value="10 hits in 1143 CRISPR screens"/>
</dbReference>
<dbReference type="ChiTaRS" id="SCN7A">
    <property type="organism name" value="human"/>
</dbReference>
<dbReference type="GeneWiki" id="SCN7A"/>
<dbReference type="GenomeRNAi" id="6332"/>
<dbReference type="Pharos" id="Q01118">
    <property type="development level" value="Tclin"/>
</dbReference>
<dbReference type="PRO" id="PR:Q01118"/>
<dbReference type="Proteomes" id="UP000005640">
    <property type="component" value="Chromosome 2"/>
</dbReference>
<dbReference type="RNAct" id="Q01118">
    <property type="molecule type" value="protein"/>
</dbReference>
<dbReference type="Bgee" id="ENSG00000136546">
    <property type="expression patterns" value="Expressed in trigeminal ganglion and 160 other cell types or tissues"/>
</dbReference>
<dbReference type="ExpressionAtlas" id="Q01118">
    <property type="expression patterns" value="baseline and differential"/>
</dbReference>
<dbReference type="GO" id="GO:0097386">
    <property type="term" value="C:glial cell projection"/>
    <property type="evidence" value="ECO:0007669"/>
    <property type="project" value="Ensembl"/>
</dbReference>
<dbReference type="GO" id="GO:0005886">
    <property type="term" value="C:plasma membrane"/>
    <property type="evidence" value="ECO:0000250"/>
    <property type="project" value="UniProtKB"/>
</dbReference>
<dbReference type="GO" id="GO:0001518">
    <property type="term" value="C:voltage-gated sodium channel complex"/>
    <property type="evidence" value="ECO:0000318"/>
    <property type="project" value="GO_Central"/>
</dbReference>
<dbReference type="GO" id="GO:1990760">
    <property type="term" value="F:osmolarity-sensing monoatomic cation channel activity"/>
    <property type="evidence" value="ECO:0000250"/>
    <property type="project" value="UniProtKB"/>
</dbReference>
<dbReference type="GO" id="GO:0005272">
    <property type="term" value="F:sodium channel activity"/>
    <property type="evidence" value="ECO:0000315"/>
    <property type="project" value="UniProtKB"/>
</dbReference>
<dbReference type="GO" id="GO:0044325">
    <property type="term" value="F:transmembrane transporter binding"/>
    <property type="evidence" value="ECO:0007669"/>
    <property type="project" value="Ensembl"/>
</dbReference>
<dbReference type="GO" id="GO:0005248">
    <property type="term" value="F:voltage-gated sodium channel activity"/>
    <property type="evidence" value="ECO:0000318"/>
    <property type="project" value="GO_Central"/>
</dbReference>
<dbReference type="GO" id="GO:0086002">
    <property type="term" value="P:cardiac muscle cell action potential involved in contraction"/>
    <property type="evidence" value="ECO:0000318"/>
    <property type="project" value="GO_Central"/>
</dbReference>
<dbReference type="GO" id="GO:0019725">
    <property type="term" value="P:cellular homeostasis"/>
    <property type="evidence" value="ECO:0007669"/>
    <property type="project" value="Ensembl"/>
</dbReference>
<dbReference type="GO" id="GO:0007231">
    <property type="term" value="P:osmosensory signaling pathway"/>
    <property type="evidence" value="ECO:0000250"/>
    <property type="project" value="UniProtKB"/>
</dbReference>
<dbReference type="GO" id="GO:0009617">
    <property type="term" value="P:response to bacterium"/>
    <property type="evidence" value="ECO:0007669"/>
    <property type="project" value="Ensembl"/>
</dbReference>
<dbReference type="GO" id="GO:0055078">
    <property type="term" value="P:sodium ion homeostasis"/>
    <property type="evidence" value="ECO:0000315"/>
    <property type="project" value="UniProtKB"/>
</dbReference>
<dbReference type="GO" id="GO:0035725">
    <property type="term" value="P:sodium ion transmembrane transport"/>
    <property type="evidence" value="ECO:0000318"/>
    <property type="project" value="GO_Central"/>
</dbReference>
<dbReference type="CDD" id="cd13433">
    <property type="entry name" value="Na_channel_gate"/>
    <property type="match status" value="1"/>
</dbReference>
<dbReference type="FunFam" id="1.10.238.10:FF:000171">
    <property type="entry name" value="Sodium channel protein"/>
    <property type="match status" value="1"/>
</dbReference>
<dbReference type="FunFam" id="1.10.287.70:FF:000091">
    <property type="entry name" value="Sodium channel protein"/>
    <property type="match status" value="1"/>
</dbReference>
<dbReference type="FunFam" id="1.10.287.70:FF:000112">
    <property type="entry name" value="Sodium channel protein"/>
    <property type="match status" value="1"/>
</dbReference>
<dbReference type="FunFam" id="1.20.120.350:FF:000002">
    <property type="entry name" value="Sodium channel protein"/>
    <property type="match status" value="1"/>
</dbReference>
<dbReference type="FunFam" id="1.20.120.350:FF:000057">
    <property type="entry name" value="Sodium channel protein"/>
    <property type="match status" value="1"/>
</dbReference>
<dbReference type="FunFam" id="1.20.120.350:FF:000059">
    <property type="entry name" value="Sodium channel protein"/>
    <property type="match status" value="1"/>
</dbReference>
<dbReference type="FunFam" id="1.20.120.350:FF:000083">
    <property type="entry name" value="Sodium channel protein"/>
    <property type="match status" value="1"/>
</dbReference>
<dbReference type="FunFam" id="1.20.5.1190:FF:000006">
    <property type="entry name" value="Sodium channel protein"/>
    <property type="match status" value="1"/>
</dbReference>
<dbReference type="Gene3D" id="1.10.287.70">
    <property type="match status" value="4"/>
</dbReference>
<dbReference type="Gene3D" id="1.10.238.10">
    <property type="entry name" value="EF-hand"/>
    <property type="match status" value="1"/>
</dbReference>
<dbReference type="Gene3D" id="1.20.5.1190">
    <property type="entry name" value="iswi atpase"/>
    <property type="match status" value="1"/>
</dbReference>
<dbReference type="Gene3D" id="1.20.120.350">
    <property type="entry name" value="Voltage-gated potassium channels. Chain C"/>
    <property type="match status" value="4"/>
</dbReference>
<dbReference type="InterPro" id="IPR005821">
    <property type="entry name" value="Ion_trans_dom"/>
</dbReference>
<dbReference type="InterPro" id="IPR001696">
    <property type="entry name" value="Na_channel_asu"/>
</dbReference>
<dbReference type="InterPro" id="IPR044564">
    <property type="entry name" value="Na_chnl_inactivation_gate"/>
</dbReference>
<dbReference type="InterPro" id="IPR010526">
    <property type="entry name" value="Na_trans_assoc_dom"/>
</dbReference>
<dbReference type="InterPro" id="IPR043203">
    <property type="entry name" value="VGCC_Ca_Na"/>
</dbReference>
<dbReference type="InterPro" id="IPR027359">
    <property type="entry name" value="Volt_channel_dom_sf"/>
</dbReference>
<dbReference type="PANTHER" id="PTHR10037:SF14">
    <property type="entry name" value="SODIUM CHANNEL PROTEIN"/>
    <property type="match status" value="1"/>
</dbReference>
<dbReference type="PANTHER" id="PTHR10037">
    <property type="entry name" value="VOLTAGE-GATED CATION CHANNEL CALCIUM AND SODIUM"/>
    <property type="match status" value="1"/>
</dbReference>
<dbReference type="Pfam" id="PF00520">
    <property type="entry name" value="Ion_trans"/>
    <property type="match status" value="4"/>
</dbReference>
<dbReference type="Pfam" id="PF24609">
    <property type="entry name" value="IQ_SCN5A_C"/>
    <property type="match status" value="1"/>
</dbReference>
<dbReference type="Pfam" id="PF06512">
    <property type="entry name" value="Na_trans_assoc"/>
    <property type="match status" value="1"/>
</dbReference>
<dbReference type="PRINTS" id="PR00170">
    <property type="entry name" value="NACHANNEL"/>
</dbReference>
<dbReference type="SUPFAM" id="SSF81324">
    <property type="entry name" value="Voltage-gated potassium channels"/>
    <property type="match status" value="4"/>
</dbReference>
<comment type="function">
    <text evidence="1 6 7">Sodium leak channel functioning as an osmosensor regulating sodium ion levels in various tissues and organs. While most sodium channels are voltage-gated, SCN7A is not and lets sodium flow through membrane along its concentration gradient (PubMed:26537257, PubMed:35301303). In glial cells of the central nervous system, senses body-fluid sodium levels and controls salt intake behavior as well as voluntary water intake through activation of nearby neurons to maintain appropriate sodium levels in the body (By similarity). By mediating sodium influx into keratinocytes, also plays a role in skin barrier homeostasis (PubMed:26537257).</text>
</comment>
<comment type="catalytic activity">
    <reaction evidence="6">
        <text>Na(+)(in) = Na(+)(out)</text>
        <dbReference type="Rhea" id="RHEA:34963"/>
        <dbReference type="ChEBI" id="CHEBI:29101"/>
    </reaction>
</comment>
<comment type="subunit">
    <text evidence="1 7">The sodium channel formed by SCN7A is probably a heterooligomeric complex consisting of the ion conducting pore forming alpha subunit SCN7A and regulatory beta subunits such as SCN3B (PubMed:35301303). Interacts with ATP1A1; activates ATP1A1 and thereby indirectly signals to nearby neurons to regulate sodium homeostasis (By similarity).</text>
</comment>
<comment type="interaction">
    <interactant intactId="EBI-44443060">
        <id>Q01118</id>
    </interactant>
    <interactant intactId="EBI-17247926">
        <id>Q9NY72</id>
        <label>SCN3B</label>
    </interactant>
    <organismsDiffer>false</organismsDiffer>
    <experiments>3</experiments>
</comment>
<comment type="subcellular location">
    <subcellularLocation>
        <location evidence="11">Cell membrane</location>
        <topology evidence="3">Multi-pass membrane protein</topology>
    </subcellularLocation>
</comment>
<comment type="tissue specificity">
    <text evidence="5">Heart and uterus.</text>
</comment>
<comment type="domain">
    <text evidence="10">The sequence contains 4 internal repeats, each with 5 hydrophobic segments (S1, S2, S3, S5, S6) and one positively charged segment (S4). Segments S4 are probably the voltage-sensors and are characterized by a series of positively charged amino acids at every third position.</text>
</comment>
<comment type="similarity">
    <text evidence="10">Belongs to the sodium channel (TC 1.A.1.10) family. SCN7A subfamily.</text>
</comment>
<feature type="chain" id="PRO_0000048499" description="Sodium channel protein type 7 subunit alpha">
    <location>
        <begin position="1"/>
        <end position="1682"/>
    </location>
</feature>
<feature type="topological domain" description="Cytoplasmic" evidence="7 13 14">
    <location>
        <begin position="1"/>
        <end position="117"/>
    </location>
</feature>
<feature type="transmembrane region" description="Helical; Name=S1 of repeat I" evidence="7 13 14">
    <location>
        <begin position="118"/>
        <end position="137"/>
    </location>
</feature>
<feature type="topological domain" description="Extracellular" evidence="7 13 14">
    <location>
        <begin position="138"/>
        <end position="141"/>
    </location>
</feature>
<feature type="transmembrane region" description="Helical; Name=S2 of repeat I" evidence="7 13 14">
    <location>
        <begin position="142"/>
        <end position="167"/>
    </location>
</feature>
<feature type="topological domain" description="Cytoplasmic" evidence="7 13 14">
    <location>
        <begin position="168"/>
        <end position="178"/>
    </location>
</feature>
<feature type="transmembrane region" description="Helical; Name=S3 of repeat I" evidence="7 13 14">
    <location>
        <begin position="179"/>
        <end position="196"/>
    </location>
</feature>
<feature type="topological domain" description="Extracellular" evidence="7 13 14">
    <location>
        <begin position="197"/>
        <end position="200"/>
    </location>
</feature>
<feature type="transmembrane region" description="Helical; Name=S4 of repeat I" evidence="7 13 14">
    <location>
        <begin position="201"/>
        <end position="219"/>
    </location>
</feature>
<feature type="topological domain" description="Cytoplasmic" evidence="7 13 14">
    <location>
        <begin position="220"/>
        <end position="237"/>
    </location>
</feature>
<feature type="transmembrane region" description="Helical; Name=S5 of repeat I" evidence="7 13 14">
    <location>
        <begin position="238"/>
        <end position="259"/>
    </location>
</feature>
<feature type="topological domain" description="Extracellular" evidence="7 13 14">
    <location>
        <begin position="260"/>
        <end position="338"/>
    </location>
</feature>
<feature type="intramembrane region" description="Pore-forming" evidence="2">
    <location>
        <begin position="339"/>
        <end position="366"/>
    </location>
</feature>
<feature type="topological domain" description="Extracellular" evidence="7 13 14">
    <location>
        <position position="367"/>
    </location>
</feature>
<feature type="transmembrane region" description="Helical; Name=S6 of repeat I" evidence="7 13 14">
    <location>
        <begin position="368"/>
        <end position="407"/>
    </location>
</feature>
<feature type="topological domain" description="Cytoplasmic" evidence="7 13 14">
    <location>
        <begin position="408"/>
        <end position="505"/>
    </location>
</feature>
<feature type="transmembrane region" description="Helical; Name=S1 of repeat II" evidence="7 13 14">
    <location>
        <begin position="506"/>
        <end position="521"/>
    </location>
</feature>
<feature type="topological domain" description="Extracellular" evidence="7 13 14">
    <location>
        <begin position="522"/>
        <end position="530"/>
    </location>
</feature>
<feature type="transmembrane region" description="Helical; Name=S2 of repeat II" evidence="7 13 14">
    <location>
        <begin position="531"/>
        <end position="559"/>
    </location>
</feature>
<feature type="topological domain" description="Cytoplasmic" evidence="7 13 14">
    <location>
        <begin position="560"/>
        <end position="568"/>
    </location>
</feature>
<feature type="transmembrane region" description="Helical; Name=S3 of repeat II" evidence="7 13 14">
    <location>
        <begin position="569"/>
        <end position="586"/>
    </location>
</feature>
<feature type="topological domain" description="Extracellular" evidence="7 13 14">
    <location>
        <begin position="587"/>
        <end position="592"/>
    </location>
</feature>
<feature type="transmembrane region" description="Helical; Name=S4 of repeat II" evidence="7 13 14">
    <location>
        <begin position="593"/>
        <end position="609"/>
    </location>
</feature>
<feature type="topological domain" description="Cytoplasmic" evidence="7 13 14">
    <location>
        <begin position="610"/>
        <end position="626"/>
    </location>
</feature>
<feature type="transmembrane region" description="Helical; Name=S5 of repeat II" evidence="7 13 14">
    <location>
        <begin position="627"/>
        <end position="655"/>
    </location>
</feature>
<feature type="topological domain" description="Extracellular" evidence="7 13 14">
    <location>
        <begin position="656"/>
        <end position="673"/>
    </location>
</feature>
<feature type="intramembrane region" description="Pore-forming" evidence="2">
    <location>
        <begin position="674"/>
        <end position="700"/>
    </location>
</feature>
<feature type="topological domain" description="Extracellular" evidence="7 13 14">
    <location>
        <position position="701"/>
    </location>
</feature>
<feature type="transmembrane region" description="Helical; Name=S6 of repeat II" evidence="7 13 14">
    <location>
        <begin position="702"/>
        <end position="732"/>
    </location>
</feature>
<feature type="topological domain" description="Cytoplasmic" evidence="7 13 14">
    <location>
        <begin position="733"/>
        <end position="934"/>
    </location>
</feature>
<feature type="transmembrane region" description="Helical; Name=S1 of repeat III" evidence="7 13 14">
    <location>
        <begin position="935"/>
        <end position="953"/>
    </location>
</feature>
<feature type="topological domain" description="Extracellular" evidence="7 13 14">
    <location>
        <begin position="954"/>
        <end position="961"/>
    </location>
</feature>
<feature type="transmembrane region" description="Helical; Name=S2 of repeat III" evidence="7 13 14">
    <location>
        <begin position="962"/>
        <end position="990"/>
    </location>
</feature>
<feature type="topological domain" description="Cytoplasmic" evidence="7 13 14">
    <location>
        <begin position="991"/>
        <end position="998"/>
    </location>
</feature>
<feature type="transmembrane region" description="Helical; Name=S3 of repeat III" evidence="7 13 14">
    <location>
        <begin position="999"/>
        <end position="1020"/>
    </location>
</feature>
<feature type="topological domain" description="Extracellular" evidence="7 13 14">
    <location>
        <position position="1021"/>
    </location>
</feature>
<feature type="transmembrane region" description="Helical; Name=S4 of repeat III" evidence="7 13 14">
    <location>
        <begin position="1022"/>
        <end position="1040"/>
    </location>
</feature>
<feature type="topological domain" description="Cytoplasmic" evidence="7 13 14">
    <location>
        <begin position="1041"/>
        <end position="1055"/>
    </location>
</feature>
<feature type="transmembrane region" description="Helical; Name=S5 of repeat III" evidence="7 13 14">
    <location>
        <begin position="1056"/>
        <end position="1080"/>
    </location>
</feature>
<feature type="topological domain" description="Extracellular" evidence="7 13 14">
    <location>
        <begin position="1081"/>
        <end position="1127"/>
    </location>
</feature>
<feature type="intramembrane region" description="Pore-forming" evidence="2">
    <location>
        <begin position="1128"/>
        <end position="1154"/>
    </location>
</feature>
<feature type="topological domain" description="Extracellular" evidence="7 13 14">
    <location>
        <begin position="1155"/>
        <end position="1167"/>
    </location>
</feature>
<feature type="transmembrane region" description="Helical; Name=S6 of repeat III" evidence="7 13 14">
    <location>
        <begin position="1168"/>
        <end position="1202"/>
    </location>
</feature>
<feature type="topological domain" description="Cytoplasmic" evidence="7 13 14">
    <location>
        <begin position="1203"/>
        <end position="1250"/>
    </location>
</feature>
<feature type="transmembrane region" description="Helical; Name=S1 of repeat IV" evidence="7 13 14">
    <location>
        <begin position="1251"/>
        <end position="1272"/>
    </location>
</feature>
<feature type="topological domain" description="Extracellular" evidence="7 13 14">
    <location>
        <begin position="1273"/>
        <end position="1276"/>
    </location>
</feature>
<feature type="transmembrane region" description="Helical; Name=S2 of repeat IV" evidence="7 13 14">
    <location>
        <begin position="1277"/>
        <end position="1305"/>
    </location>
</feature>
<feature type="topological domain" description="Cytoplasmic" evidence="7 13 14">
    <location>
        <begin position="1306"/>
        <end position="1312"/>
    </location>
</feature>
<feature type="transmembrane region" description="Helical; Name=S3 of repeat IV" evidence="7 13 14">
    <location>
        <begin position="1313"/>
        <end position="1338"/>
    </location>
</feature>
<feature type="topological domain" description="Extracellular" evidence="7 13 14">
    <location>
        <begin position="1339"/>
        <end position="1341"/>
    </location>
</feature>
<feature type="transmembrane region" description="Helical; Name=S4 of repeat IV" evidence="7 13 14">
    <location>
        <begin position="1342"/>
        <end position="1362"/>
    </location>
</feature>
<feature type="topological domain" description="Cytoplasmic" evidence="7 13 14">
    <location>
        <begin position="1363"/>
        <end position="1377"/>
    </location>
</feature>
<feature type="transmembrane region" description="Helical; Name=S5 of repeat IV" evidence="7 13 14">
    <location>
        <begin position="1378"/>
        <end position="1402"/>
    </location>
</feature>
<feature type="topological domain" description="Extracellular" evidence="7 13 14">
    <location>
        <begin position="1403"/>
        <end position="1420"/>
    </location>
</feature>
<feature type="intramembrane region" description="Pore-forming" evidence="2">
    <location>
        <begin position="1421"/>
        <end position="1444"/>
    </location>
</feature>
<feature type="topological domain" description="Extracellular" evidence="7 13 14">
    <location>
        <begin position="1445"/>
        <end position="1468"/>
    </location>
</feature>
<feature type="transmembrane region" description="Helical; Name=S6 of repeat IV" evidence="7 13 14">
    <location>
        <begin position="1469"/>
        <end position="1504"/>
    </location>
</feature>
<feature type="topological domain" description="Cytoplasmic" evidence="7 13 14">
    <location>
        <begin position="1505"/>
        <end position="1682"/>
    </location>
</feature>
<feature type="repeat" description="I" evidence="11">
    <location>
        <begin position="100"/>
        <end position="401"/>
    </location>
</feature>
<feature type="repeat" description="II" evidence="11">
    <location>
        <begin position="487"/>
        <end position="758"/>
    </location>
</feature>
<feature type="repeat" description="III" evidence="11">
    <location>
        <begin position="916"/>
        <end position="1224"/>
    </location>
</feature>
<feature type="repeat" description="IV" evidence="11">
    <location>
        <begin position="1233"/>
        <end position="1531"/>
    </location>
</feature>
<feature type="region of interest" description="Disordered" evidence="4">
    <location>
        <begin position="801"/>
        <end position="871"/>
    </location>
</feature>
<feature type="compositionally biased region" description="Basic and acidic residues" evidence="4">
    <location>
        <begin position="804"/>
        <end position="819"/>
    </location>
</feature>
<feature type="compositionally biased region" description="Polar residues" evidence="4">
    <location>
        <begin position="820"/>
        <end position="834"/>
    </location>
</feature>
<feature type="modified residue" description="Phosphoserine; by PKA" evidence="3">
    <location>
        <position position="442"/>
    </location>
</feature>
<feature type="modified residue" description="Phosphothreonine; by PKA" evidence="3">
    <location>
        <position position="777"/>
    </location>
</feature>
<feature type="modified residue" description="Phosphoserine" evidence="15">
    <location>
        <position position="843"/>
    </location>
</feature>
<feature type="modified residue" description="Phosphoserine; by PKA" evidence="3">
    <location>
        <position position="869"/>
    </location>
</feature>
<feature type="modified residue" description="Phosphoserine; by PKA" evidence="3">
    <location>
        <position position="905"/>
    </location>
</feature>
<feature type="glycosylation site" description="N-linked (GlcNAc...) asparagine" evidence="3">
    <location>
        <position position="276"/>
    </location>
</feature>
<feature type="glycosylation site" description="N-linked (GlcNAc...) asparagine" evidence="3">
    <location>
        <position position="281"/>
    </location>
</feature>
<feature type="glycosylation site" description="N-linked (GlcNAc...) asparagine" evidence="7 13">
    <location>
        <position position="309"/>
    </location>
</feature>
<feature type="glycosylation site" description="N-linked (GlcNAc...) asparagine" evidence="7 13 14">
    <location>
        <position position="1103"/>
    </location>
</feature>
<feature type="glycosylation site" description="N-linked (GlcNAc...) asparagine" evidence="3">
    <location>
        <position position="1113"/>
    </location>
</feature>
<feature type="disulfide bond" evidence="7 14">
    <location>
        <begin position="267"/>
        <end position="307"/>
    </location>
</feature>
<feature type="disulfide bond" evidence="7 14">
    <location>
        <begin position="658"/>
        <end position="664"/>
    </location>
</feature>
<feature type="disulfide bond" evidence="7 13 14">
    <location>
        <begin position="696"/>
        <end position="705"/>
    </location>
</feature>
<feature type="disulfide bond" evidence="7 13 14">
    <location>
        <begin position="1087"/>
        <end position="1107"/>
    </location>
</feature>
<feature type="disulfide bond" evidence="7 14">
    <location>
        <begin position="1451"/>
        <end position="1466"/>
    </location>
</feature>
<feature type="sequence variant" id="VAR_063120" description="In dbSNP:rs7565062." evidence="5">
    <original>T</original>
    <variation>N</variation>
    <location>
        <position position="41"/>
    </location>
</feature>
<feature type="sequence variant" id="VAR_024410" description="In dbSNP:rs11888208.">
    <original>I</original>
    <variation>V</variation>
    <location>
        <position position="407"/>
    </location>
</feature>
<feature type="sequence variant" id="VAR_055641" description="In dbSNP:rs34183637.">
    <original>M</original>
    <variation>L</variation>
    <location>
        <position position="600"/>
    </location>
</feature>
<feature type="sequence variant" id="VAR_063121" description="In dbSNP:rs6738031." evidence="5">
    <original>M</original>
    <variation>I</variation>
    <location>
        <position position="958"/>
    </location>
</feature>
<feature type="sequence variant" id="VAR_055642" description="In dbSNP:rs6760593.">
    <original>A</original>
    <variation>V</variation>
    <location>
        <position position="1313"/>
    </location>
</feature>
<feature type="sequence variant" id="VAR_055643" description="In dbSNP:rs34799257.">
    <original>R</original>
    <variation>K</variation>
    <location>
        <position position="1516"/>
    </location>
</feature>
<feature type="sequence variant" id="VAR_055644" description="In dbSNP:rs3791251.">
    <original>V</original>
    <variation>L</variation>
    <location>
        <position position="1596"/>
    </location>
</feature>
<feature type="sequence variant" id="VAR_055645" description="In dbSNP:rs35344714.">
    <original>D</original>
    <variation>G</variation>
    <location>
        <position position="1657"/>
    </location>
</feature>
<feature type="mutagenesis site" description="Increased non-selective monoatomic cation leak channel activity; when associated with T-1189 and T-1492." evidence="7">
    <original>F</original>
    <variation>E</variation>
    <location>
        <position position="724"/>
    </location>
</feature>
<feature type="mutagenesis site" description="Increased non-selective monoatomic cation leak channel activity; when associated with T-1189 and T-1492." evidence="7">
    <original>F</original>
    <variation>Q</variation>
    <location>
        <position position="724"/>
    </location>
</feature>
<feature type="mutagenesis site" description="Increased non-selective monoatomic cation leak channel activity; when associated with Q-724 and T-1492." evidence="7">
    <original>I</original>
    <variation>E</variation>
    <location>
        <position position="1189"/>
    </location>
</feature>
<feature type="mutagenesis site" description="Increased non-selective monoatomic cation leak channel activity; when associated with Q-724 and T-1492." evidence="7">
    <original>I</original>
    <variation>T</variation>
    <location>
        <position position="1189"/>
    </location>
</feature>
<feature type="mutagenesis site" description="Increased non-selective monoatomic cation leak channel activity; when associated with Q-724 and T-1189." evidence="7">
    <original>I</original>
    <variation>E</variation>
    <location>
        <position position="1492"/>
    </location>
</feature>
<feature type="mutagenesis site" description="Increased non-selective monoatomic cation leak channel activity; when associated with Q-724 and T-1189." evidence="7">
    <original>I</original>
    <variation>T</variation>
    <location>
        <position position="1492"/>
    </location>
</feature>
<feature type="sequence conflict" description="In Ref. 1; AAA59899." evidence="10" ref="1">
    <original>Q</original>
    <variation>L</variation>
    <location>
        <position position="361"/>
    </location>
</feature>
<feature type="helix" evidence="17">
    <location>
        <begin position="106"/>
        <end position="115"/>
    </location>
</feature>
<feature type="helix" evidence="17">
    <location>
        <begin position="118"/>
        <end position="135"/>
    </location>
</feature>
<feature type="helix" evidence="17">
    <location>
        <begin position="144"/>
        <end position="166"/>
    </location>
</feature>
<feature type="strand" evidence="17">
    <location>
        <begin position="170"/>
        <end position="174"/>
    </location>
</feature>
<feature type="turn" evidence="17">
    <location>
        <begin position="175"/>
        <end position="177"/>
    </location>
</feature>
<feature type="helix" evidence="17">
    <location>
        <begin position="179"/>
        <end position="195"/>
    </location>
</feature>
<feature type="helix" evidence="17">
    <location>
        <begin position="202"/>
        <end position="210"/>
    </location>
</feature>
<feature type="helix" evidence="17">
    <location>
        <begin position="211"/>
        <end position="216"/>
    </location>
</feature>
<feature type="turn" evidence="17">
    <location>
        <begin position="217"/>
        <end position="219"/>
    </location>
</feature>
<feature type="helix" evidence="17">
    <location>
        <begin position="221"/>
        <end position="236"/>
    </location>
</feature>
<feature type="helix" evidence="17">
    <location>
        <begin position="238"/>
        <end position="259"/>
    </location>
</feature>
<feature type="helix" evidence="17">
    <location>
        <begin position="262"/>
        <end position="264"/>
    </location>
</feature>
<feature type="strand" evidence="17">
    <location>
        <begin position="265"/>
        <end position="270"/>
    </location>
</feature>
<feature type="helix" evidence="16">
    <location>
        <begin position="286"/>
        <end position="288"/>
    </location>
</feature>
<feature type="turn" evidence="17">
    <location>
        <begin position="292"/>
        <end position="294"/>
    </location>
</feature>
<feature type="strand" evidence="17">
    <location>
        <begin position="320"/>
        <end position="324"/>
    </location>
</feature>
<feature type="helix" evidence="17">
    <location>
        <begin position="330"/>
        <end position="332"/>
    </location>
</feature>
<feature type="helix" evidence="17">
    <location>
        <begin position="341"/>
        <end position="350"/>
    </location>
</feature>
<feature type="helix" evidence="17">
    <location>
        <begin position="355"/>
        <end position="365"/>
    </location>
</feature>
<feature type="helix" evidence="17">
    <location>
        <begin position="368"/>
        <end position="370"/>
    </location>
</feature>
<feature type="helix" evidence="17">
    <location>
        <begin position="371"/>
        <end position="381"/>
    </location>
</feature>
<feature type="helix" evidence="17">
    <location>
        <begin position="384"/>
        <end position="403"/>
    </location>
</feature>
<feature type="helix" evidence="17">
    <location>
        <begin position="508"/>
        <end position="523"/>
    </location>
</feature>
<feature type="helix" evidence="17">
    <location>
        <begin position="532"/>
        <end position="558"/>
    </location>
</feature>
<feature type="helix" evidence="17">
    <location>
        <begin position="561"/>
        <end position="564"/>
    </location>
</feature>
<feature type="helix" evidence="17">
    <location>
        <begin position="568"/>
        <end position="584"/>
    </location>
</feature>
<feature type="strand" evidence="16">
    <location>
        <begin position="585"/>
        <end position="590"/>
    </location>
</feature>
<feature type="helix" evidence="17">
    <location>
        <begin position="596"/>
        <end position="609"/>
    </location>
</feature>
<feature type="helix" evidence="17">
    <location>
        <begin position="611"/>
        <end position="655"/>
    </location>
</feature>
<feature type="helix" evidence="17">
    <location>
        <begin position="657"/>
        <end position="659"/>
    </location>
</feature>
<feature type="helix" evidence="17">
    <location>
        <begin position="674"/>
        <end position="685"/>
    </location>
</feature>
<feature type="helix" evidence="17">
    <location>
        <begin position="691"/>
        <end position="699"/>
    </location>
</feature>
<feature type="helix" evidence="17">
    <location>
        <begin position="702"/>
        <end position="732"/>
    </location>
</feature>
<feature type="helix" evidence="17">
    <location>
        <begin position="922"/>
        <end position="932"/>
    </location>
</feature>
<feature type="helix" evidence="17">
    <location>
        <begin position="934"/>
        <end position="949"/>
    </location>
</feature>
<feature type="helix" evidence="17">
    <location>
        <begin position="950"/>
        <end position="953"/>
    </location>
</feature>
<feature type="turn" evidence="17">
    <location>
        <begin position="956"/>
        <end position="960"/>
    </location>
</feature>
<feature type="helix" evidence="17">
    <location>
        <begin position="962"/>
        <end position="990"/>
    </location>
</feature>
<feature type="helix" evidence="17">
    <location>
        <begin position="992"/>
        <end position="996"/>
    </location>
</feature>
<feature type="helix" evidence="17">
    <location>
        <begin position="999"/>
        <end position="1016"/>
    </location>
</feature>
<feature type="turn" evidence="17">
    <location>
        <begin position="1021"/>
        <end position="1023"/>
    </location>
</feature>
<feature type="helix" evidence="17">
    <location>
        <begin position="1024"/>
        <end position="1035"/>
    </location>
</feature>
<feature type="helix" evidence="17">
    <location>
        <begin position="1036"/>
        <end position="1040"/>
    </location>
</feature>
<feature type="helix" evidence="17">
    <location>
        <begin position="1042"/>
        <end position="1055"/>
    </location>
</feature>
<feature type="helix" evidence="16">
    <location>
        <begin position="1056"/>
        <end position="1058"/>
    </location>
</feature>
<feature type="helix" evidence="17">
    <location>
        <begin position="1059"/>
        <end position="1080"/>
    </location>
</feature>
<feature type="strand" evidence="17">
    <location>
        <begin position="1086"/>
        <end position="1088"/>
    </location>
</feature>
<feature type="turn" evidence="17">
    <location>
        <begin position="1090"/>
        <end position="1092"/>
    </location>
</feature>
<feature type="turn" evidence="17">
    <location>
        <begin position="1098"/>
        <end position="1100"/>
    </location>
</feature>
<feature type="helix" evidence="17">
    <location>
        <begin position="1104"/>
        <end position="1108"/>
    </location>
</feature>
<feature type="strand" evidence="16">
    <location>
        <begin position="1111"/>
        <end position="1113"/>
    </location>
</feature>
<feature type="strand" evidence="17">
    <location>
        <begin position="1117"/>
        <end position="1119"/>
    </location>
</feature>
<feature type="helix" evidence="17">
    <location>
        <begin position="1128"/>
        <end position="1139"/>
    </location>
</feature>
<feature type="helix" evidence="17">
    <location>
        <begin position="1144"/>
        <end position="1151"/>
    </location>
</feature>
<feature type="strand" evidence="17">
    <location>
        <begin position="1156"/>
        <end position="1159"/>
    </location>
</feature>
<feature type="helix" evidence="17">
    <location>
        <begin position="1167"/>
        <end position="1169"/>
    </location>
</feature>
<feature type="helix" evidence="17">
    <location>
        <begin position="1170"/>
        <end position="1179"/>
    </location>
</feature>
<feature type="helix" evidence="17">
    <location>
        <begin position="1182"/>
        <end position="1203"/>
    </location>
</feature>
<feature type="strand" evidence="17">
    <location>
        <begin position="1208"/>
        <end position="1210"/>
    </location>
</feature>
<feature type="helix" evidence="17">
    <location>
        <begin position="1212"/>
        <end position="1224"/>
    </location>
</feature>
<feature type="helix" evidence="17">
    <location>
        <begin position="1246"/>
        <end position="1249"/>
    </location>
</feature>
<feature type="helix" evidence="17">
    <location>
        <begin position="1251"/>
        <end position="1268"/>
    </location>
</feature>
<feature type="strand" evidence="17">
    <location>
        <begin position="1272"/>
        <end position="1274"/>
    </location>
</feature>
<feature type="helix" evidence="17">
    <location>
        <begin position="1277"/>
        <end position="1304"/>
    </location>
</feature>
<feature type="turn" evidence="17">
    <location>
        <begin position="1306"/>
        <end position="1311"/>
    </location>
</feature>
<feature type="helix" evidence="17">
    <location>
        <begin position="1313"/>
        <end position="1334"/>
    </location>
</feature>
<feature type="helix" evidence="17">
    <location>
        <begin position="1344"/>
        <end position="1350"/>
    </location>
</feature>
<feature type="helix" evidence="17">
    <location>
        <begin position="1351"/>
        <end position="1357"/>
    </location>
</feature>
<feature type="strand" evidence="17">
    <location>
        <begin position="1358"/>
        <end position="1362"/>
    </location>
</feature>
<feature type="helix" evidence="17">
    <location>
        <begin position="1364"/>
        <end position="1402"/>
    </location>
</feature>
<feature type="strand" evidence="17">
    <location>
        <begin position="1413"/>
        <end position="1419"/>
    </location>
</feature>
<feature type="helix" evidence="17">
    <location>
        <begin position="1420"/>
        <end position="1431"/>
    </location>
</feature>
<feature type="helix" evidence="17">
    <location>
        <begin position="1436"/>
        <end position="1443"/>
    </location>
</feature>
<feature type="helix" evidence="17">
    <location>
        <begin position="1444"/>
        <end position="1446"/>
    </location>
</feature>
<feature type="turn" evidence="17">
    <location>
        <begin position="1447"/>
        <end position="1449"/>
    </location>
</feature>
<feature type="helix" evidence="17">
    <location>
        <begin position="1469"/>
        <end position="1502"/>
    </location>
</feature>
<keyword id="KW-0002">3D-structure</keyword>
<keyword id="KW-1003">Cell membrane</keyword>
<keyword id="KW-1015">Disulfide bond</keyword>
<keyword id="KW-0325">Glycoprotein</keyword>
<keyword id="KW-0472">Membrane</keyword>
<keyword id="KW-0597">Phosphoprotein</keyword>
<keyword id="KW-1267">Proteomics identification</keyword>
<keyword id="KW-1185">Reference proteome</keyword>
<keyword id="KW-0677">Repeat</keyword>
<keyword id="KW-0812">Transmembrane</keyword>
<keyword id="KW-1133">Transmembrane helix</keyword>
<proteinExistence type="evidence at protein level"/>
<gene>
    <name evidence="12" type="primary">SCN7A</name>
    <name evidence="12" type="synonym">SCN6A</name>
</gene>
<evidence type="ECO:0000250" key="1">
    <source>
        <dbReference type="UniProtKB" id="B1AYL1"/>
    </source>
</evidence>
<evidence type="ECO:0000250" key="2">
    <source>
        <dbReference type="UniProtKB" id="D0E0C2"/>
    </source>
</evidence>
<evidence type="ECO:0000255" key="3"/>
<evidence type="ECO:0000256" key="4">
    <source>
        <dbReference type="SAM" id="MobiDB-lite"/>
    </source>
</evidence>
<evidence type="ECO:0000269" key="5">
    <source>
    </source>
</evidence>
<evidence type="ECO:0000269" key="6">
    <source>
    </source>
</evidence>
<evidence type="ECO:0000269" key="7">
    <source>
    </source>
</evidence>
<evidence type="ECO:0000303" key="8">
    <source>
    </source>
</evidence>
<evidence type="ECO:0000303" key="9">
    <source>
    </source>
</evidence>
<evidence type="ECO:0000305" key="10"/>
<evidence type="ECO:0000305" key="11">
    <source>
    </source>
</evidence>
<evidence type="ECO:0000312" key="12">
    <source>
        <dbReference type="HGNC" id="HGNC:10594"/>
    </source>
</evidence>
<evidence type="ECO:0007744" key="13">
    <source>
        <dbReference type="PDB" id="7TJ8"/>
    </source>
</evidence>
<evidence type="ECO:0007744" key="14">
    <source>
        <dbReference type="PDB" id="7TJ9"/>
    </source>
</evidence>
<evidence type="ECO:0007744" key="15">
    <source>
    </source>
</evidence>
<evidence type="ECO:0007829" key="16">
    <source>
        <dbReference type="PDB" id="7TJ8"/>
    </source>
</evidence>
<evidence type="ECO:0007829" key="17">
    <source>
        <dbReference type="PDB" id="7TJ9"/>
    </source>
</evidence>
<organism>
    <name type="scientific">Homo sapiens</name>
    <name type="common">Human</name>
    <dbReference type="NCBI Taxonomy" id="9606"/>
    <lineage>
        <taxon>Eukaryota</taxon>
        <taxon>Metazoa</taxon>
        <taxon>Chordata</taxon>
        <taxon>Craniata</taxon>
        <taxon>Vertebrata</taxon>
        <taxon>Euteleostomi</taxon>
        <taxon>Mammalia</taxon>
        <taxon>Eutheria</taxon>
        <taxon>Euarchontoglires</taxon>
        <taxon>Primates</taxon>
        <taxon>Haplorrhini</taxon>
        <taxon>Catarrhini</taxon>
        <taxon>Hominidae</taxon>
        <taxon>Homo</taxon>
    </lineage>
</organism>
<reference key="1">
    <citation type="journal article" date="1992" name="Proc. Natl. Acad. Sci. U.S.A.">
        <title>Molecular cloning of an atypical voltage-gated sodium channel expressed in human heart and uterus: evidence for a distinct gene family.</title>
        <authorList>
            <person name="George A.L. Jr."/>
            <person name="Knittle T.J."/>
            <person name="Tamkun M.M."/>
        </authorList>
    </citation>
    <scope>NUCLEOTIDE SEQUENCE [MRNA]</scope>
    <scope>TISSUE SPECIFICITY</scope>
    <scope>VARIANTS ASN-41 AND ILE-958</scope>
    <source>
        <tissue>Fetal skeletal muscle</tissue>
        <tissue>Heart</tissue>
    </source>
</reference>
<reference key="2">
    <citation type="journal article" date="2005" name="Nature">
        <title>Generation and annotation of the DNA sequences of human chromosomes 2 and 4.</title>
        <authorList>
            <person name="Hillier L.W."/>
            <person name="Graves T.A."/>
            <person name="Fulton R.S."/>
            <person name="Fulton L.A."/>
            <person name="Pepin K.H."/>
            <person name="Minx P."/>
            <person name="Wagner-McPherson C."/>
            <person name="Layman D."/>
            <person name="Wylie K."/>
            <person name="Sekhon M."/>
            <person name="Becker M.C."/>
            <person name="Fewell G.A."/>
            <person name="Delehaunty K.D."/>
            <person name="Miner T.L."/>
            <person name="Nash W.E."/>
            <person name="Kremitzki C."/>
            <person name="Oddy L."/>
            <person name="Du H."/>
            <person name="Sun H."/>
            <person name="Bradshaw-Cordum H."/>
            <person name="Ali J."/>
            <person name="Carter J."/>
            <person name="Cordes M."/>
            <person name="Harris A."/>
            <person name="Isak A."/>
            <person name="van Brunt A."/>
            <person name="Nguyen C."/>
            <person name="Du F."/>
            <person name="Courtney L."/>
            <person name="Kalicki J."/>
            <person name="Ozersky P."/>
            <person name="Abbott S."/>
            <person name="Armstrong J."/>
            <person name="Belter E.A."/>
            <person name="Caruso L."/>
            <person name="Cedroni M."/>
            <person name="Cotton M."/>
            <person name="Davidson T."/>
            <person name="Desai A."/>
            <person name="Elliott G."/>
            <person name="Erb T."/>
            <person name="Fronick C."/>
            <person name="Gaige T."/>
            <person name="Haakenson W."/>
            <person name="Haglund K."/>
            <person name="Holmes A."/>
            <person name="Harkins R."/>
            <person name="Kim K."/>
            <person name="Kruchowski S.S."/>
            <person name="Strong C.M."/>
            <person name="Grewal N."/>
            <person name="Goyea E."/>
            <person name="Hou S."/>
            <person name="Levy A."/>
            <person name="Martinka S."/>
            <person name="Mead K."/>
            <person name="McLellan M.D."/>
            <person name="Meyer R."/>
            <person name="Randall-Maher J."/>
            <person name="Tomlinson C."/>
            <person name="Dauphin-Kohlberg S."/>
            <person name="Kozlowicz-Reilly A."/>
            <person name="Shah N."/>
            <person name="Swearengen-Shahid S."/>
            <person name="Snider J."/>
            <person name="Strong J.T."/>
            <person name="Thompson J."/>
            <person name="Yoakum M."/>
            <person name="Leonard S."/>
            <person name="Pearman C."/>
            <person name="Trani L."/>
            <person name="Radionenko M."/>
            <person name="Waligorski J.E."/>
            <person name="Wang C."/>
            <person name="Rock S.M."/>
            <person name="Tin-Wollam A.-M."/>
            <person name="Maupin R."/>
            <person name="Latreille P."/>
            <person name="Wendl M.C."/>
            <person name="Yang S.-P."/>
            <person name="Pohl C."/>
            <person name="Wallis J.W."/>
            <person name="Spieth J."/>
            <person name="Bieri T.A."/>
            <person name="Berkowicz N."/>
            <person name="Nelson J.O."/>
            <person name="Osborne J."/>
            <person name="Ding L."/>
            <person name="Meyer R."/>
            <person name="Sabo A."/>
            <person name="Shotland Y."/>
            <person name="Sinha P."/>
            <person name="Wohldmann P.E."/>
            <person name="Cook L.L."/>
            <person name="Hickenbotham M.T."/>
            <person name="Eldred J."/>
            <person name="Williams D."/>
            <person name="Jones T.A."/>
            <person name="She X."/>
            <person name="Ciccarelli F.D."/>
            <person name="Izaurralde E."/>
            <person name="Taylor J."/>
            <person name="Schmutz J."/>
            <person name="Myers R.M."/>
            <person name="Cox D.R."/>
            <person name="Huang X."/>
            <person name="McPherson J.D."/>
            <person name="Mardis E.R."/>
            <person name="Clifton S.W."/>
            <person name="Warren W.C."/>
            <person name="Chinwalla A.T."/>
            <person name="Eddy S.R."/>
            <person name="Marra M.A."/>
            <person name="Ovcharenko I."/>
            <person name="Furey T.S."/>
            <person name="Miller W."/>
            <person name="Eichler E.E."/>
            <person name="Bork P."/>
            <person name="Suyama M."/>
            <person name="Torrents D."/>
            <person name="Waterston R.H."/>
            <person name="Wilson R.K."/>
        </authorList>
    </citation>
    <scope>NUCLEOTIDE SEQUENCE [LARGE SCALE GENOMIC DNA]</scope>
</reference>
<reference key="3">
    <citation type="journal article" date="2014" name="J. Proteomics">
        <title>An enzyme assisted RP-RPLC approach for in-depth analysis of human liver phosphoproteome.</title>
        <authorList>
            <person name="Bian Y."/>
            <person name="Song C."/>
            <person name="Cheng K."/>
            <person name="Dong M."/>
            <person name="Wang F."/>
            <person name="Huang J."/>
            <person name="Sun D."/>
            <person name="Wang L."/>
            <person name="Ye M."/>
            <person name="Zou H."/>
        </authorList>
    </citation>
    <scope>PHOSPHORYLATION [LARGE SCALE ANALYSIS] AT SER-843</scope>
    <scope>IDENTIFICATION BY MASS SPECTROMETRY [LARGE SCALE ANALYSIS]</scope>
    <source>
        <tissue>Liver</tissue>
    </source>
</reference>
<reference key="4">
    <citation type="journal article" date="2015" name="Sci. Transl. Med.">
        <title>Sodium channel Nax is a regulator in epithelial sodium homeostasis.</title>
        <authorList>
            <person name="Xu W."/>
            <person name="Hong S.J."/>
            <person name="Zhong A."/>
            <person name="Xie P."/>
            <person name="Jia S."/>
            <person name="Xie Z."/>
            <person name="Zeitchek M."/>
            <person name="Niknam-Bienia S."/>
            <person name="Zhao J."/>
            <person name="Porterfield D.M."/>
            <person name="Surmeier D.J."/>
            <person name="Leung K.P."/>
            <person name="Galiano R.D."/>
            <person name="Mustoe T.A."/>
        </authorList>
    </citation>
    <scope>FUNCTION</scope>
    <scope>TRANSPORTER ACTIVITY</scope>
</reference>
<reference evidence="13 14" key="5">
    <citation type="journal article" date="2022" name="Nat. Commun.">
        <title>Structure-guided unlocking of NaX reveals a non-selective tetrodotoxin-sensitive cation channel.</title>
        <authorList>
            <person name="Noland C.L."/>
            <person name="Chua H.C."/>
            <person name="Kschonsak M."/>
            <person name="Heusser S.A."/>
            <person name="Braun N."/>
            <person name="Chang T."/>
            <person name="Tam C."/>
            <person name="Tang J."/>
            <person name="Arthur C.P."/>
            <person name="Ciferri C."/>
            <person name="Pless S.A."/>
            <person name="Payandeh J."/>
        </authorList>
    </citation>
    <scope>STRUCTURE BY ELECTRON MICROSCOPY (2.90 ANGSTROMS) OF 99-1504 IN COMPLEX WITH SCN3B</scope>
    <scope>SUBUNIT</scope>
    <scope>MUTAGENESIS OF PHE-724; ILE-1189 AND ILE-1492</scope>
    <scope>FUNCTION</scope>
    <scope>SUBCELLULAR LOCATION</scope>
    <scope>TOPOLOGY</scope>
    <scope>REPEAT</scope>
    <scope>DISULFIDE BONDS</scope>
    <scope>GLYCOSYLATION AT ASN-309 AND ASN-1103</scope>
</reference>
<protein>
    <recommendedName>
        <fullName evidence="10">Sodium channel protein type 7 subunit alpha</fullName>
    </recommendedName>
    <alternativeName>
        <fullName evidence="8">Atypical sodium channel Nav2.1</fullName>
    </alternativeName>
    <alternativeName>
        <fullName evidence="9">Nax channel</fullName>
    </alternativeName>
    <alternativeName>
        <fullName>Sodium channel protein type VII subunit alpha</fullName>
    </alternativeName>
</protein>
<name>SCN7A_HUMAN</name>